<comment type="function">
    <text evidence="1">Catalyzes the phosphorylation of the position 2 hydroxy group of 4-diphosphocytidyl-2C-methyl-D-erythritol.</text>
</comment>
<comment type="catalytic activity">
    <reaction evidence="1">
        <text>4-CDP-2-C-methyl-D-erythritol + ATP = 4-CDP-2-C-methyl-D-erythritol 2-phosphate + ADP + H(+)</text>
        <dbReference type="Rhea" id="RHEA:18437"/>
        <dbReference type="ChEBI" id="CHEBI:15378"/>
        <dbReference type="ChEBI" id="CHEBI:30616"/>
        <dbReference type="ChEBI" id="CHEBI:57823"/>
        <dbReference type="ChEBI" id="CHEBI:57919"/>
        <dbReference type="ChEBI" id="CHEBI:456216"/>
        <dbReference type="EC" id="2.7.1.148"/>
    </reaction>
</comment>
<comment type="pathway">
    <text evidence="1">Isoprenoid biosynthesis; isopentenyl diphosphate biosynthesis via DXP pathway; isopentenyl diphosphate from 1-deoxy-D-xylulose 5-phosphate: step 3/6.</text>
</comment>
<comment type="similarity">
    <text evidence="1">Belongs to the GHMP kinase family. IspE subfamily.</text>
</comment>
<reference key="1">
    <citation type="journal article" date="2005" name="Genome Res.">
        <title>Comparative and functional genomic analyses of the pathogenicity of phytopathogen Xanthomonas campestris pv. campestris.</title>
        <authorList>
            <person name="Qian W."/>
            <person name="Jia Y."/>
            <person name="Ren S.-X."/>
            <person name="He Y.-Q."/>
            <person name="Feng J.-X."/>
            <person name="Lu L.-F."/>
            <person name="Sun Q."/>
            <person name="Ying G."/>
            <person name="Tang D.-J."/>
            <person name="Tang H."/>
            <person name="Wu W."/>
            <person name="Hao P."/>
            <person name="Wang L."/>
            <person name="Jiang B.-L."/>
            <person name="Zeng S."/>
            <person name="Gu W.-Y."/>
            <person name="Lu G."/>
            <person name="Rong L."/>
            <person name="Tian Y."/>
            <person name="Yao Z."/>
            <person name="Fu G."/>
            <person name="Chen B."/>
            <person name="Fang R."/>
            <person name="Qiang B."/>
            <person name="Chen Z."/>
            <person name="Zhao G.-P."/>
            <person name="Tang J.-L."/>
            <person name="He C."/>
        </authorList>
    </citation>
    <scope>NUCLEOTIDE SEQUENCE [LARGE SCALE GENOMIC DNA]</scope>
    <source>
        <strain>8004</strain>
    </source>
</reference>
<organism>
    <name type="scientific">Xanthomonas campestris pv. campestris (strain 8004)</name>
    <dbReference type="NCBI Taxonomy" id="314565"/>
    <lineage>
        <taxon>Bacteria</taxon>
        <taxon>Pseudomonadati</taxon>
        <taxon>Pseudomonadota</taxon>
        <taxon>Gammaproteobacteria</taxon>
        <taxon>Lysobacterales</taxon>
        <taxon>Lysobacteraceae</taxon>
        <taxon>Xanthomonas</taxon>
    </lineage>
</organism>
<dbReference type="EC" id="2.7.1.148" evidence="1"/>
<dbReference type="EMBL" id="CP000050">
    <property type="protein sequence ID" value="AAY50403.1"/>
    <property type="molecule type" value="Genomic_DNA"/>
</dbReference>
<dbReference type="RefSeq" id="WP_011036107.1">
    <property type="nucleotide sequence ID" value="NZ_CP155948.1"/>
</dbReference>
<dbReference type="SMR" id="Q4URC0"/>
<dbReference type="KEGG" id="xcb:XC_3359"/>
<dbReference type="HOGENOM" id="CLU_053057_3_0_6"/>
<dbReference type="UniPathway" id="UPA00056">
    <property type="reaction ID" value="UER00094"/>
</dbReference>
<dbReference type="Proteomes" id="UP000000420">
    <property type="component" value="Chromosome"/>
</dbReference>
<dbReference type="GO" id="GO:0050515">
    <property type="term" value="F:4-(cytidine 5'-diphospho)-2-C-methyl-D-erythritol kinase activity"/>
    <property type="evidence" value="ECO:0007669"/>
    <property type="project" value="UniProtKB-UniRule"/>
</dbReference>
<dbReference type="GO" id="GO:0005524">
    <property type="term" value="F:ATP binding"/>
    <property type="evidence" value="ECO:0007669"/>
    <property type="project" value="UniProtKB-UniRule"/>
</dbReference>
<dbReference type="GO" id="GO:0019288">
    <property type="term" value="P:isopentenyl diphosphate biosynthetic process, methylerythritol 4-phosphate pathway"/>
    <property type="evidence" value="ECO:0007669"/>
    <property type="project" value="UniProtKB-UniRule"/>
</dbReference>
<dbReference type="GO" id="GO:0016114">
    <property type="term" value="P:terpenoid biosynthetic process"/>
    <property type="evidence" value="ECO:0007669"/>
    <property type="project" value="InterPro"/>
</dbReference>
<dbReference type="FunFam" id="3.30.230.10:FF:000022">
    <property type="entry name" value="4-diphosphocytidyl-2-C-methyl-D-erythritol kinase"/>
    <property type="match status" value="1"/>
</dbReference>
<dbReference type="FunFam" id="3.30.70.890:FF:000014">
    <property type="entry name" value="4-diphosphocytidyl-2-C-methyl-D-erythritol kinase"/>
    <property type="match status" value="1"/>
</dbReference>
<dbReference type="Gene3D" id="3.30.230.10">
    <property type="match status" value="1"/>
</dbReference>
<dbReference type="Gene3D" id="3.30.70.890">
    <property type="entry name" value="GHMP kinase, C-terminal domain"/>
    <property type="match status" value="1"/>
</dbReference>
<dbReference type="HAMAP" id="MF_00061">
    <property type="entry name" value="IspE"/>
    <property type="match status" value="1"/>
</dbReference>
<dbReference type="InterPro" id="IPR013750">
    <property type="entry name" value="GHMP_kinase_C_dom"/>
</dbReference>
<dbReference type="InterPro" id="IPR036554">
    <property type="entry name" value="GHMP_kinase_C_sf"/>
</dbReference>
<dbReference type="InterPro" id="IPR006204">
    <property type="entry name" value="GHMP_kinase_N_dom"/>
</dbReference>
<dbReference type="InterPro" id="IPR004424">
    <property type="entry name" value="IspE"/>
</dbReference>
<dbReference type="InterPro" id="IPR020568">
    <property type="entry name" value="Ribosomal_Su5_D2-typ_SF"/>
</dbReference>
<dbReference type="InterPro" id="IPR014721">
    <property type="entry name" value="Ribsml_uS5_D2-typ_fold_subgr"/>
</dbReference>
<dbReference type="NCBIfam" id="TIGR00154">
    <property type="entry name" value="ispE"/>
    <property type="match status" value="1"/>
</dbReference>
<dbReference type="PANTHER" id="PTHR43527">
    <property type="entry name" value="4-DIPHOSPHOCYTIDYL-2-C-METHYL-D-ERYTHRITOL KINASE, CHLOROPLASTIC"/>
    <property type="match status" value="1"/>
</dbReference>
<dbReference type="PANTHER" id="PTHR43527:SF2">
    <property type="entry name" value="4-DIPHOSPHOCYTIDYL-2-C-METHYL-D-ERYTHRITOL KINASE, CHLOROPLASTIC"/>
    <property type="match status" value="1"/>
</dbReference>
<dbReference type="Pfam" id="PF08544">
    <property type="entry name" value="GHMP_kinases_C"/>
    <property type="match status" value="1"/>
</dbReference>
<dbReference type="Pfam" id="PF00288">
    <property type="entry name" value="GHMP_kinases_N"/>
    <property type="match status" value="1"/>
</dbReference>
<dbReference type="PIRSF" id="PIRSF010376">
    <property type="entry name" value="IspE"/>
    <property type="match status" value="1"/>
</dbReference>
<dbReference type="SUPFAM" id="SSF55060">
    <property type="entry name" value="GHMP Kinase, C-terminal domain"/>
    <property type="match status" value="1"/>
</dbReference>
<dbReference type="SUPFAM" id="SSF54211">
    <property type="entry name" value="Ribosomal protein S5 domain 2-like"/>
    <property type="match status" value="1"/>
</dbReference>
<sequence>MDALALMSASNPAWSAWPAPAKLNLFLQIVGRRADGYHLLQTVFRLLDWGDTVHVRLRTDGQIQRIGASLPGVAEDDDLMVRAARALQIHAGTALGAELRVDKRIPAGGGFGGGSSDAATVLVALNALWGLGLPVDTLAELGLRLGADVPVFVRGHNAWAEGVGEKLTPISLPQAAYVLVDPGIHVPTPVLFQSQELTRDAAPAKIADFASGSLLDNAFEPVLRRREPAIEAVFQALSRIGTPRLTGSGSGCFVEFATRAAAEQAMAHLPGNLRAWVVEGAAHSPLLDALDAIQV</sequence>
<feature type="chain" id="PRO_0000235153" description="4-diphosphocytidyl-2-C-methyl-D-erythritol kinase">
    <location>
        <begin position="1"/>
        <end position="295"/>
    </location>
</feature>
<feature type="active site" evidence="1">
    <location>
        <position position="22"/>
    </location>
</feature>
<feature type="active site" evidence="1">
    <location>
        <position position="148"/>
    </location>
</feature>
<feature type="binding site" evidence="1">
    <location>
        <begin position="106"/>
        <end position="116"/>
    </location>
    <ligand>
        <name>ATP</name>
        <dbReference type="ChEBI" id="CHEBI:30616"/>
    </ligand>
</feature>
<protein>
    <recommendedName>
        <fullName evidence="1">4-diphosphocytidyl-2-C-methyl-D-erythritol kinase</fullName>
        <shortName evidence="1">CMK</shortName>
        <ecNumber evidence="1">2.7.1.148</ecNumber>
    </recommendedName>
    <alternativeName>
        <fullName evidence="1">4-(cytidine-5'-diphospho)-2-C-methyl-D-erythritol kinase</fullName>
    </alternativeName>
</protein>
<gene>
    <name evidence="1" type="primary">ispE</name>
    <name type="ordered locus">XC_3359</name>
</gene>
<name>ISPE_XANC8</name>
<accession>Q4URC0</accession>
<keyword id="KW-0067">ATP-binding</keyword>
<keyword id="KW-0414">Isoprene biosynthesis</keyword>
<keyword id="KW-0418">Kinase</keyword>
<keyword id="KW-0547">Nucleotide-binding</keyword>
<keyword id="KW-0808">Transferase</keyword>
<proteinExistence type="inferred from homology"/>
<evidence type="ECO:0000255" key="1">
    <source>
        <dbReference type="HAMAP-Rule" id="MF_00061"/>
    </source>
</evidence>